<evidence type="ECO:0000256" key="1">
    <source>
        <dbReference type="SAM" id="MobiDB-lite"/>
    </source>
</evidence>
<evidence type="ECO:0000305" key="2"/>
<accession>Q9RN04</accession>
<accession>Q8KYF9</accession>
<proteinExistence type="predicted"/>
<geneLocation type="plasmid">
    <name>pXO2</name>
</geneLocation>
<sequence length="497" mass="56514">MQPYTTVKDEAHVKALTHVPRNKDENGSAFHGVTFLKQLTMDNPNHKNVEIWLNNSFIESNNPNKIDLQSNGWYRYTGEQDLSKVVSILLYINDSLSSSDVAKMNLVYGTHKNGFGDQYVSKTVVNTSVDYKLSPISNQVRYTIVANANIGLRKIRIDTAPAESGLPVTVRLDKDIVYEDSSKDEITVNLYDKADNRLVGSKVYTIGELPEEIKFKVDRKFLKKKSKRNYEVRFEKINKESIFVAEGKNKVDTDGYTSSEETVKANSKESTELKYKGVIMTEREVGKEMEVFHETLTIPLKQLPKQKTGYGFELKTEASYNNELAVPYDIKVGALIDKKLIDSHLNYEQKEGNTYVPLEETNKNISSDKRNNDFTFELPHVNVEQKTGALFTDQQVKDKDSRIKNALKDGKRKLYAPIWADLGDYNIFVKSELPIGANKVNFEVTQPLHVYAFMYGTIGSDTLKDDEILVEPVDPRNPFSNGKPSGWSDEDVAWLKR</sequence>
<protein>
    <recommendedName>
        <fullName>Uncharacterized protein pXO2-28/BXB0027/GBAA_pXO2_0027</fullName>
    </recommendedName>
</protein>
<gene>
    <name type="ordered locus">pXO2-28</name>
    <name type="ordered locus">BXB0027</name>
    <name type="ordered locus">GBAA_pXO2_0027</name>
</gene>
<feature type="chain" id="PRO_0000216844" description="Uncharacterized protein pXO2-28/BXB0027/GBAA_pXO2_0027">
    <location>
        <begin position="1"/>
        <end position="497"/>
    </location>
</feature>
<feature type="region of interest" description="Disordered" evidence="1">
    <location>
        <begin position="474"/>
        <end position="497"/>
    </location>
</feature>
<feature type="compositionally biased region" description="Acidic residues" evidence="1">
    <location>
        <begin position="488"/>
        <end position="497"/>
    </location>
</feature>
<comment type="sequence caution" evidence="2">
    <conflict type="erroneous initiation">
        <sequence resource="EMBL-CDS" id="AAF13633"/>
    </conflict>
</comment>
<name>Y6527_BACAN</name>
<reference key="1">
    <citation type="journal article" date="1999" name="J. Appl. Microbiol.">
        <title>Sequence, assembly and analysis of pXO1 and pXO2.</title>
        <authorList>
            <person name="Okinaka R.T."/>
            <person name="Cloud K."/>
            <person name="Hampton O."/>
            <person name="Hoffmaster A."/>
            <person name="Hill K.K."/>
            <person name="Keim P."/>
            <person name="Koehler T."/>
            <person name="Lamke G."/>
            <person name="Kumano S."/>
            <person name="Manter D."/>
            <person name="Martinez Y."/>
            <person name="Ricke D."/>
            <person name="Svensson R."/>
            <person name="Jackson P.J."/>
        </authorList>
    </citation>
    <scope>NUCLEOTIDE SEQUENCE [GENOMIC DNA]</scope>
    <source>
        <strain>Pasteur</strain>
    </source>
</reference>
<reference key="2">
    <citation type="journal article" date="2002" name="Science">
        <title>Comparative genome sequencing for discovery of novel polymorphisms in Bacillus anthracis.</title>
        <authorList>
            <person name="Read T.D."/>
            <person name="Salzberg S.L."/>
            <person name="Pop M."/>
            <person name="Shumway M.F."/>
            <person name="Umayam L."/>
            <person name="Jiang L."/>
            <person name="Holtzapple E."/>
            <person name="Busch J.D."/>
            <person name="Smith K.L."/>
            <person name="Schupp J.M."/>
            <person name="Solomon D."/>
            <person name="Keim P."/>
            <person name="Fraser C.M."/>
        </authorList>
    </citation>
    <scope>NUCLEOTIDE SEQUENCE [GENOMIC DNA]</scope>
    <source>
        <strain>Ames / isolate Florida / A2012</strain>
    </source>
</reference>
<reference key="3">
    <citation type="journal article" date="2009" name="J. Bacteriol.">
        <title>The complete genome sequence of Bacillus anthracis Ames 'Ancestor'.</title>
        <authorList>
            <person name="Ravel J."/>
            <person name="Jiang L."/>
            <person name="Stanley S.T."/>
            <person name="Wilson M.R."/>
            <person name="Decker R.S."/>
            <person name="Read T.D."/>
            <person name="Worsham P."/>
            <person name="Keim P.S."/>
            <person name="Salzberg S.L."/>
            <person name="Fraser-Liggett C.M."/>
            <person name="Rasko D.A."/>
        </authorList>
    </citation>
    <scope>NUCLEOTIDE SEQUENCE [LARGE SCALE GENOMIC DNA]</scope>
    <source>
        <strain>Ames ancestor</strain>
    </source>
</reference>
<keyword id="KW-0614">Plasmid</keyword>
<keyword id="KW-1185">Reference proteome</keyword>
<organism>
    <name type="scientific">Bacillus anthracis</name>
    <dbReference type="NCBI Taxonomy" id="1392"/>
    <lineage>
        <taxon>Bacteria</taxon>
        <taxon>Bacillati</taxon>
        <taxon>Bacillota</taxon>
        <taxon>Bacilli</taxon>
        <taxon>Bacillales</taxon>
        <taxon>Bacillaceae</taxon>
        <taxon>Bacillus</taxon>
        <taxon>Bacillus cereus group</taxon>
    </lineage>
</organism>
<dbReference type="EMBL" id="AF188935">
    <property type="protein sequence ID" value="AAF13633.1"/>
    <property type="status" value="ALT_INIT"/>
    <property type="molecule type" value="Genomic_DNA"/>
</dbReference>
<dbReference type="EMBL" id="AE011191">
    <property type="status" value="NOT_ANNOTATED_CDS"/>
    <property type="molecule type" value="Genomic_DNA"/>
</dbReference>
<dbReference type="EMBL" id="AE017335">
    <property type="protein sequence ID" value="AAT28957.2"/>
    <property type="molecule type" value="Genomic_DNA"/>
</dbReference>
<dbReference type="RefSeq" id="NP_053183.1">
    <property type="nucleotide sequence ID" value="NC_002146.1"/>
</dbReference>
<dbReference type="RefSeq" id="WP_011289926.1">
    <property type="nucleotide sequence ID" value="NZ_VTZL01000009.1"/>
</dbReference>
<dbReference type="KEGG" id="bar:GBAA_pXO2_0027"/>
<dbReference type="HOGENOM" id="CLU_555116_0_0_9"/>
<dbReference type="Proteomes" id="UP000000594">
    <property type="component" value="Plasmid pXO2"/>
</dbReference>